<feature type="chain" id="PRO_0000150669" description="Olfactory receptor 8J1">
    <location>
        <begin position="1"/>
        <end position="316"/>
    </location>
</feature>
<feature type="topological domain" description="Extracellular" evidence="1">
    <location>
        <begin position="1"/>
        <end position="25"/>
    </location>
</feature>
<feature type="transmembrane region" description="Helical; Name=1" evidence="1">
    <location>
        <begin position="26"/>
        <end position="46"/>
    </location>
</feature>
<feature type="topological domain" description="Cytoplasmic" evidence="1">
    <location>
        <begin position="47"/>
        <end position="54"/>
    </location>
</feature>
<feature type="transmembrane region" description="Helical; Name=2" evidence="1">
    <location>
        <begin position="55"/>
        <end position="75"/>
    </location>
</feature>
<feature type="topological domain" description="Extracellular" evidence="1">
    <location>
        <begin position="76"/>
        <end position="99"/>
    </location>
</feature>
<feature type="transmembrane region" description="Helical; Name=3" evidence="1">
    <location>
        <begin position="100"/>
        <end position="120"/>
    </location>
</feature>
<feature type="topological domain" description="Cytoplasmic" evidence="1">
    <location>
        <begin position="121"/>
        <end position="139"/>
    </location>
</feature>
<feature type="transmembrane region" description="Helical; Name=4" evidence="1">
    <location>
        <begin position="140"/>
        <end position="160"/>
    </location>
</feature>
<feature type="topological domain" description="Extracellular" evidence="1">
    <location>
        <begin position="161"/>
        <end position="197"/>
    </location>
</feature>
<feature type="transmembrane region" description="Helical; Name=5" evidence="1">
    <location>
        <begin position="198"/>
        <end position="217"/>
    </location>
</feature>
<feature type="topological domain" description="Cytoplasmic" evidence="1">
    <location>
        <begin position="218"/>
        <end position="237"/>
    </location>
</feature>
<feature type="transmembrane region" description="Helical; Name=6" evidence="1">
    <location>
        <begin position="238"/>
        <end position="258"/>
    </location>
</feature>
<feature type="topological domain" description="Extracellular" evidence="1">
    <location>
        <begin position="259"/>
        <end position="272"/>
    </location>
</feature>
<feature type="transmembrane region" description="Helical; Name=7" evidence="1">
    <location>
        <begin position="273"/>
        <end position="293"/>
    </location>
</feature>
<feature type="topological domain" description="Cytoplasmic" evidence="1">
    <location>
        <begin position="294"/>
        <end position="316"/>
    </location>
</feature>
<feature type="glycosylation site" description="N-linked (GlcNAc...) asparagine" evidence="1">
    <location>
        <position position="5"/>
    </location>
</feature>
<feature type="disulfide bond" evidence="2">
    <location>
        <begin position="97"/>
        <end position="189"/>
    </location>
</feature>
<feature type="sequence variant" id="VAR_034268" description="In dbSNP:rs7927015.">
    <original>G</original>
    <variation>V</variation>
    <location>
        <position position="36"/>
    </location>
</feature>
<feature type="sequence variant" id="VAR_034269" description="In dbSNP:rs7942730.">
    <original>M</original>
    <variation>L</variation>
    <location>
        <position position="114"/>
    </location>
</feature>
<feature type="sequence variant" id="VAR_060013" description="In dbSNP:rs10896290." evidence="3 4 5 6">
    <original>Y</original>
    <variation>C</variation>
    <location>
        <position position="120"/>
    </location>
</feature>
<accession>Q8NGP2</accession>
<accession>B2RNQ6</accession>
<accession>B9EH63</accession>
<accession>Q6IFC2</accession>
<accession>Q96RC3</accession>
<evidence type="ECO:0000255" key="1"/>
<evidence type="ECO:0000255" key="2">
    <source>
        <dbReference type="PROSITE-ProRule" id="PRU00521"/>
    </source>
</evidence>
<evidence type="ECO:0000269" key="3">
    <source>
    </source>
</evidence>
<evidence type="ECO:0000269" key="4">
    <source>
    </source>
</evidence>
<evidence type="ECO:0000269" key="5">
    <source>
    </source>
</evidence>
<evidence type="ECO:0000269" key="6">
    <source ref="1"/>
</evidence>
<evidence type="ECO:0000305" key="7"/>
<comment type="function">
    <text evidence="7">Odorant receptor.</text>
</comment>
<comment type="subcellular location">
    <subcellularLocation>
        <location>Cell membrane</location>
        <topology>Multi-pass membrane protein</topology>
    </subcellularLocation>
</comment>
<comment type="similarity">
    <text evidence="2">Belongs to the G-protein coupled receptor 1 family.</text>
</comment>
<comment type="online information" name="Human Olfactory Receptor Data Exploratorium (HORDE)">
    <link uri="http://genome.weizmann.ac.il/horde/card/index/symbol:OR8J1"/>
</comment>
<keyword id="KW-1003">Cell membrane</keyword>
<keyword id="KW-1015">Disulfide bond</keyword>
<keyword id="KW-0297">G-protein coupled receptor</keyword>
<keyword id="KW-0325">Glycoprotein</keyword>
<keyword id="KW-0472">Membrane</keyword>
<keyword id="KW-0552">Olfaction</keyword>
<keyword id="KW-0675">Receptor</keyword>
<keyword id="KW-1185">Reference proteome</keyword>
<keyword id="KW-0716">Sensory transduction</keyword>
<keyword id="KW-0807">Transducer</keyword>
<keyword id="KW-0812">Transmembrane</keyword>
<keyword id="KW-1133">Transmembrane helix</keyword>
<proteinExistence type="evidence at transcript level"/>
<name>OR8J1_HUMAN</name>
<gene>
    <name type="primary">OR8J1</name>
</gene>
<reference key="1">
    <citation type="submission" date="2001-07" db="EMBL/GenBank/DDBJ databases">
        <title>Genome-wide discovery and analysis of human seven transmembrane helix receptor genes.</title>
        <authorList>
            <person name="Suwa M."/>
            <person name="Sato T."/>
            <person name="Okouchi I."/>
            <person name="Arita M."/>
            <person name="Futami K."/>
            <person name="Matsumoto S."/>
            <person name="Tsutsumi S."/>
            <person name="Aburatani H."/>
            <person name="Asai K."/>
            <person name="Akiyama Y."/>
        </authorList>
    </citation>
    <scope>NUCLEOTIDE SEQUENCE [GENOMIC DNA]</scope>
    <scope>VARIANT CYS-120</scope>
</reference>
<reference key="2">
    <citation type="journal article" date="2006" name="Nature">
        <title>Human chromosome 11 DNA sequence and analysis including novel gene identification.</title>
        <authorList>
            <person name="Taylor T.D."/>
            <person name="Noguchi H."/>
            <person name="Totoki Y."/>
            <person name="Toyoda A."/>
            <person name="Kuroki Y."/>
            <person name="Dewar K."/>
            <person name="Lloyd C."/>
            <person name="Itoh T."/>
            <person name="Takeda T."/>
            <person name="Kim D.-W."/>
            <person name="She X."/>
            <person name="Barlow K.F."/>
            <person name="Bloom T."/>
            <person name="Bruford E."/>
            <person name="Chang J.L."/>
            <person name="Cuomo C.A."/>
            <person name="Eichler E."/>
            <person name="FitzGerald M.G."/>
            <person name="Jaffe D.B."/>
            <person name="LaButti K."/>
            <person name="Nicol R."/>
            <person name="Park H.-S."/>
            <person name="Seaman C."/>
            <person name="Sougnez C."/>
            <person name="Yang X."/>
            <person name="Zimmer A.R."/>
            <person name="Zody M.C."/>
            <person name="Birren B.W."/>
            <person name="Nusbaum C."/>
            <person name="Fujiyama A."/>
            <person name="Hattori M."/>
            <person name="Rogers J."/>
            <person name="Lander E.S."/>
            <person name="Sakaki Y."/>
        </authorList>
    </citation>
    <scope>NUCLEOTIDE SEQUENCE [LARGE SCALE GENOMIC DNA]</scope>
</reference>
<reference key="3">
    <citation type="journal article" date="2004" name="Genome Res.">
        <title>The status, quality, and expansion of the NIH full-length cDNA project: the Mammalian Gene Collection (MGC).</title>
        <authorList>
            <consortium name="The MGC Project Team"/>
        </authorList>
    </citation>
    <scope>NUCLEOTIDE SEQUENCE [LARGE SCALE MRNA]</scope>
    <scope>VARIANT CYS-120</scope>
    <source>
        <tissue>Testis</tissue>
    </source>
</reference>
<reference key="4">
    <citation type="journal article" date="2002" name="Genomics">
        <title>DEFOG: a practical scheme for deciphering families of genes.</title>
        <authorList>
            <person name="Fuchs T."/>
            <person name="Malecova B."/>
            <person name="Linhart C."/>
            <person name="Sharan R."/>
            <person name="Khen M."/>
            <person name="Herwig R."/>
            <person name="Shmulevich D."/>
            <person name="Elkon R."/>
            <person name="Steinfath M."/>
            <person name="O'Brien J.K."/>
            <person name="Radelof U."/>
            <person name="Lehrach H."/>
            <person name="Lancet D."/>
            <person name="Shamir R."/>
        </authorList>
    </citation>
    <scope>NUCLEOTIDE SEQUENCE [GENOMIC DNA] OF 68-284</scope>
    <scope>VARIANT CYS-120</scope>
</reference>
<reference key="5">
    <citation type="journal article" date="2004" name="Proc. Natl. Acad. Sci. U.S.A.">
        <title>The human olfactory receptor gene family.</title>
        <authorList>
            <person name="Malnic B."/>
            <person name="Godfrey P.A."/>
            <person name="Buck L.B."/>
        </authorList>
    </citation>
    <scope>IDENTIFICATION</scope>
    <scope>VARIANT CYS-120</scope>
</reference>
<reference key="6">
    <citation type="journal article" date="2004" name="Proc. Natl. Acad. Sci. U.S.A.">
        <authorList>
            <person name="Malnic B."/>
            <person name="Godfrey P.A."/>
            <person name="Buck L.B."/>
        </authorList>
    </citation>
    <scope>ERRATUM OF PUBMED:14983052</scope>
</reference>
<sequence length="316" mass="35415">MAPENFTRVTEFILTGVSSCPELQIPLFLVFLVLYGLTMAGNLGIITLTSVDSRLQTPMYFFLQHLALINLGNSTVIAPKMLINFLVKKKTTSFYECATQLGGFLFFIVSEVIMLALMAYDRYVAICNPLLYMVVVSRRLCLLLVSLTYLYGFSTAIVVSSYVFSVSYCSSNIINHFYCDNVPLLALSCSDTYLPETVVFISAATNVVGSLIIVLVSYFNIVLSILKICSSEGRKKAFSTCASHMMAVTIFYGTLLFMYVQPRSNHSLDTDDKMASVFYTLVIPMLNPLIYSLRNKDVKTALQRFMTNLCYSFKTM</sequence>
<dbReference type="EMBL" id="AB065748">
    <property type="protein sequence ID" value="BAC05968.1"/>
    <property type="molecule type" value="Genomic_DNA"/>
</dbReference>
<dbReference type="EMBL" id="AF399515">
    <property type="protein sequence ID" value="AAK95000.1"/>
    <property type="molecule type" value="Genomic_DNA"/>
</dbReference>
<dbReference type="EMBL" id="AP002512">
    <property type="status" value="NOT_ANNOTATED_CDS"/>
    <property type="molecule type" value="Genomic_DNA"/>
</dbReference>
<dbReference type="EMBL" id="BC137066">
    <property type="protein sequence ID" value="AAI37067.1"/>
    <property type="molecule type" value="mRNA"/>
</dbReference>
<dbReference type="EMBL" id="BC137067">
    <property type="protein sequence ID" value="AAI37068.1"/>
    <property type="molecule type" value="mRNA"/>
</dbReference>
<dbReference type="EMBL" id="BK004340">
    <property type="protein sequence ID" value="DAA04738.1"/>
    <property type="molecule type" value="Genomic_DNA"/>
</dbReference>
<dbReference type="CCDS" id="CCDS31529.1"/>
<dbReference type="RefSeq" id="NP_001005205.2">
    <property type="nucleotide sequence ID" value="NM_001005205.3"/>
</dbReference>
<dbReference type="SMR" id="Q8NGP2"/>
<dbReference type="FunCoup" id="Q8NGP2">
    <property type="interactions" value="416"/>
</dbReference>
<dbReference type="STRING" id="9606.ENSP00000477259"/>
<dbReference type="GlyCosmos" id="Q8NGP2">
    <property type="glycosylation" value="1 site, No reported glycans"/>
</dbReference>
<dbReference type="GlyGen" id="Q8NGP2">
    <property type="glycosylation" value="1 site"/>
</dbReference>
<dbReference type="iPTMnet" id="Q8NGP2"/>
<dbReference type="PhosphoSitePlus" id="Q8NGP2"/>
<dbReference type="BioMuta" id="OR8J1"/>
<dbReference type="DMDM" id="296439255"/>
<dbReference type="MassIVE" id="Q8NGP2"/>
<dbReference type="PaxDb" id="9606-ENSP00000304060"/>
<dbReference type="PeptideAtlas" id="Q8NGP2"/>
<dbReference type="Antibodypedia" id="58978">
    <property type="antibodies" value="48 antibodies from 13 providers"/>
</dbReference>
<dbReference type="DNASU" id="219477"/>
<dbReference type="Ensembl" id="ENST00000303039.3">
    <property type="protein sequence ID" value="ENSP00000304060.3"/>
    <property type="gene ID" value="ENSG00000172487.4"/>
</dbReference>
<dbReference type="Ensembl" id="ENST00000533152.3">
    <property type="protein sequence ID" value="ENSP00000477259.3"/>
    <property type="gene ID" value="ENSG00000172487.4"/>
</dbReference>
<dbReference type="Ensembl" id="ENST00000574644.1">
    <property type="protein sequence ID" value="ENSP00000460206.1"/>
    <property type="gene ID" value="ENSG00000262796.1"/>
</dbReference>
<dbReference type="Ensembl" id="ENST00000709009.1">
    <property type="protein sequence ID" value="ENSP00000517455.1"/>
    <property type="gene ID" value="ENSG00000291858.1"/>
</dbReference>
<dbReference type="Ensembl" id="ENST00000709011.1">
    <property type="protein sequence ID" value="ENSP00000517456.1"/>
    <property type="gene ID" value="ENSG00000291858.1"/>
</dbReference>
<dbReference type="GeneID" id="219477"/>
<dbReference type="KEGG" id="hsa:219477"/>
<dbReference type="MANE-Select" id="ENST00000533152.3">
    <property type="protein sequence ID" value="ENSP00000477259.3"/>
    <property type="RefSeq nucleotide sequence ID" value="NM_001005205.3"/>
    <property type="RefSeq protein sequence ID" value="NP_001005205.2"/>
</dbReference>
<dbReference type="UCSC" id="uc010rjh.2">
    <property type="organism name" value="human"/>
</dbReference>
<dbReference type="AGR" id="HGNC:14855"/>
<dbReference type="CTD" id="219477"/>
<dbReference type="DisGeNET" id="219477"/>
<dbReference type="GeneCards" id="OR8J1"/>
<dbReference type="HGNC" id="HGNC:14855">
    <property type="gene designation" value="OR8J1"/>
</dbReference>
<dbReference type="HPA" id="ENSG00000172487">
    <property type="expression patterns" value="Not detected"/>
</dbReference>
<dbReference type="neXtProt" id="NX_Q8NGP2"/>
<dbReference type="PharmGKB" id="PA32772"/>
<dbReference type="VEuPathDB" id="HostDB:ENSG00000172487"/>
<dbReference type="eggNOG" id="ENOG502SMQ4">
    <property type="taxonomic scope" value="Eukaryota"/>
</dbReference>
<dbReference type="GeneTree" id="ENSGT00950000182718"/>
<dbReference type="HOGENOM" id="CLU_012526_5_5_1"/>
<dbReference type="InParanoid" id="Q8NGP2"/>
<dbReference type="OMA" id="CASHMMS"/>
<dbReference type="OrthoDB" id="9011197at2759"/>
<dbReference type="PAN-GO" id="Q8NGP2">
    <property type="GO annotations" value="4 GO annotations based on evolutionary models"/>
</dbReference>
<dbReference type="PhylomeDB" id="Q8NGP2"/>
<dbReference type="TreeFam" id="TF352753"/>
<dbReference type="PathwayCommons" id="Q8NGP2"/>
<dbReference type="Reactome" id="R-HSA-9752946">
    <property type="pathway name" value="Expression and translocation of olfactory receptors"/>
</dbReference>
<dbReference type="BioGRID-ORCS" id="219477">
    <property type="hits" value="7 hits in 658 CRISPR screens"/>
</dbReference>
<dbReference type="GeneWiki" id="OR8J1"/>
<dbReference type="GenomeRNAi" id="219477"/>
<dbReference type="Pharos" id="Q8NGP2">
    <property type="development level" value="Tdark"/>
</dbReference>
<dbReference type="PRO" id="PR:Q8NGP2"/>
<dbReference type="Proteomes" id="UP000005640">
    <property type="component" value="Chromosome 11"/>
</dbReference>
<dbReference type="RNAct" id="Q8NGP2">
    <property type="molecule type" value="protein"/>
</dbReference>
<dbReference type="Bgee" id="ENSG00000172487">
    <property type="expression patterns" value="Expressed in primordial germ cell in gonad"/>
</dbReference>
<dbReference type="GO" id="GO:0005886">
    <property type="term" value="C:plasma membrane"/>
    <property type="evidence" value="ECO:0007669"/>
    <property type="project" value="UniProtKB-SubCell"/>
</dbReference>
<dbReference type="GO" id="GO:0004930">
    <property type="term" value="F:G protein-coupled receptor activity"/>
    <property type="evidence" value="ECO:0007669"/>
    <property type="project" value="UniProtKB-KW"/>
</dbReference>
<dbReference type="GO" id="GO:0004984">
    <property type="term" value="F:olfactory receptor activity"/>
    <property type="evidence" value="ECO:0007669"/>
    <property type="project" value="InterPro"/>
</dbReference>
<dbReference type="FunFam" id="1.20.1070.10:FF:000003">
    <property type="entry name" value="Olfactory receptor"/>
    <property type="match status" value="1"/>
</dbReference>
<dbReference type="Gene3D" id="1.20.1070.10">
    <property type="entry name" value="Rhodopsin 7-helix transmembrane proteins"/>
    <property type="match status" value="1"/>
</dbReference>
<dbReference type="InterPro" id="IPR000276">
    <property type="entry name" value="GPCR_Rhodpsn"/>
</dbReference>
<dbReference type="InterPro" id="IPR017452">
    <property type="entry name" value="GPCR_Rhodpsn_7TM"/>
</dbReference>
<dbReference type="InterPro" id="IPR000725">
    <property type="entry name" value="Olfact_rcpt"/>
</dbReference>
<dbReference type="PANTHER" id="PTHR48018">
    <property type="entry name" value="OLFACTORY RECEPTOR"/>
    <property type="match status" value="1"/>
</dbReference>
<dbReference type="Pfam" id="PF13853">
    <property type="entry name" value="7tm_4"/>
    <property type="match status" value="1"/>
</dbReference>
<dbReference type="PRINTS" id="PR00237">
    <property type="entry name" value="GPCRRHODOPSN"/>
</dbReference>
<dbReference type="PRINTS" id="PR00245">
    <property type="entry name" value="OLFACTORYR"/>
</dbReference>
<dbReference type="SUPFAM" id="SSF81321">
    <property type="entry name" value="Family A G protein-coupled receptor-like"/>
    <property type="match status" value="1"/>
</dbReference>
<dbReference type="PROSITE" id="PS00237">
    <property type="entry name" value="G_PROTEIN_RECEP_F1_1"/>
    <property type="match status" value="1"/>
</dbReference>
<dbReference type="PROSITE" id="PS50262">
    <property type="entry name" value="G_PROTEIN_RECEP_F1_2"/>
    <property type="match status" value="1"/>
</dbReference>
<organism>
    <name type="scientific">Homo sapiens</name>
    <name type="common">Human</name>
    <dbReference type="NCBI Taxonomy" id="9606"/>
    <lineage>
        <taxon>Eukaryota</taxon>
        <taxon>Metazoa</taxon>
        <taxon>Chordata</taxon>
        <taxon>Craniata</taxon>
        <taxon>Vertebrata</taxon>
        <taxon>Euteleostomi</taxon>
        <taxon>Mammalia</taxon>
        <taxon>Eutheria</taxon>
        <taxon>Euarchontoglires</taxon>
        <taxon>Primates</taxon>
        <taxon>Haplorrhini</taxon>
        <taxon>Catarrhini</taxon>
        <taxon>Hominidae</taxon>
        <taxon>Homo</taxon>
    </lineage>
</organism>
<protein>
    <recommendedName>
        <fullName>Olfactory receptor 8J1</fullName>
    </recommendedName>
    <alternativeName>
        <fullName>Olfactory receptor OR11-183</fullName>
    </alternativeName>
</protein>